<protein>
    <recommendedName>
        <fullName evidence="5">Late cornified envelope protein 3C</fullName>
    </recommendedName>
    <alternativeName>
        <fullName evidence="5">Late envelope protein 15</fullName>
    </alternativeName>
    <alternativeName>
        <fullName evidence="5">Small proline-rich-like epidermal differentiation complex protein 3A</fullName>
    </alternativeName>
</protein>
<reference key="1">
    <citation type="journal article" date="2006" name="Nature">
        <title>The DNA sequence and biological annotation of human chromosome 1.</title>
        <authorList>
            <person name="Gregory S.G."/>
            <person name="Barlow K.F."/>
            <person name="McLay K.E."/>
            <person name="Kaul R."/>
            <person name="Swarbreck D."/>
            <person name="Dunham A."/>
            <person name="Scott C.E."/>
            <person name="Howe K.L."/>
            <person name="Woodfine K."/>
            <person name="Spencer C.C.A."/>
            <person name="Jones M.C."/>
            <person name="Gillson C."/>
            <person name="Searle S."/>
            <person name="Zhou Y."/>
            <person name="Kokocinski F."/>
            <person name="McDonald L."/>
            <person name="Evans R."/>
            <person name="Phillips K."/>
            <person name="Atkinson A."/>
            <person name="Cooper R."/>
            <person name="Jones C."/>
            <person name="Hall R.E."/>
            <person name="Andrews T.D."/>
            <person name="Lloyd C."/>
            <person name="Ainscough R."/>
            <person name="Almeida J.P."/>
            <person name="Ambrose K.D."/>
            <person name="Anderson F."/>
            <person name="Andrew R.W."/>
            <person name="Ashwell R.I.S."/>
            <person name="Aubin K."/>
            <person name="Babbage A.K."/>
            <person name="Bagguley C.L."/>
            <person name="Bailey J."/>
            <person name="Beasley H."/>
            <person name="Bethel G."/>
            <person name="Bird C.P."/>
            <person name="Bray-Allen S."/>
            <person name="Brown J.Y."/>
            <person name="Brown A.J."/>
            <person name="Buckley D."/>
            <person name="Burton J."/>
            <person name="Bye J."/>
            <person name="Carder C."/>
            <person name="Chapman J.C."/>
            <person name="Clark S.Y."/>
            <person name="Clarke G."/>
            <person name="Clee C."/>
            <person name="Cobley V."/>
            <person name="Collier R.E."/>
            <person name="Corby N."/>
            <person name="Coville G.J."/>
            <person name="Davies J."/>
            <person name="Deadman R."/>
            <person name="Dunn M."/>
            <person name="Earthrowl M."/>
            <person name="Ellington A.G."/>
            <person name="Errington H."/>
            <person name="Frankish A."/>
            <person name="Frankland J."/>
            <person name="French L."/>
            <person name="Garner P."/>
            <person name="Garnett J."/>
            <person name="Gay L."/>
            <person name="Ghori M.R.J."/>
            <person name="Gibson R."/>
            <person name="Gilby L.M."/>
            <person name="Gillett W."/>
            <person name="Glithero R.J."/>
            <person name="Grafham D.V."/>
            <person name="Griffiths C."/>
            <person name="Griffiths-Jones S."/>
            <person name="Grocock R."/>
            <person name="Hammond S."/>
            <person name="Harrison E.S.I."/>
            <person name="Hart E."/>
            <person name="Haugen E."/>
            <person name="Heath P.D."/>
            <person name="Holmes S."/>
            <person name="Holt K."/>
            <person name="Howden P.J."/>
            <person name="Hunt A.R."/>
            <person name="Hunt S.E."/>
            <person name="Hunter G."/>
            <person name="Isherwood J."/>
            <person name="James R."/>
            <person name="Johnson C."/>
            <person name="Johnson D."/>
            <person name="Joy A."/>
            <person name="Kay M."/>
            <person name="Kershaw J.K."/>
            <person name="Kibukawa M."/>
            <person name="Kimberley A.M."/>
            <person name="King A."/>
            <person name="Knights A.J."/>
            <person name="Lad H."/>
            <person name="Laird G."/>
            <person name="Lawlor S."/>
            <person name="Leongamornlert D.A."/>
            <person name="Lloyd D.M."/>
            <person name="Loveland J."/>
            <person name="Lovell J."/>
            <person name="Lush M.J."/>
            <person name="Lyne R."/>
            <person name="Martin S."/>
            <person name="Mashreghi-Mohammadi M."/>
            <person name="Matthews L."/>
            <person name="Matthews N.S.W."/>
            <person name="McLaren S."/>
            <person name="Milne S."/>
            <person name="Mistry S."/>
            <person name="Moore M.J.F."/>
            <person name="Nickerson T."/>
            <person name="O'Dell C.N."/>
            <person name="Oliver K."/>
            <person name="Palmeiri A."/>
            <person name="Palmer S.A."/>
            <person name="Parker A."/>
            <person name="Patel D."/>
            <person name="Pearce A.V."/>
            <person name="Peck A.I."/>
            <person name="Pelan S."/>
            <person name="Phelps K."/>
            <person name="Phillimore B.J."/>
            <person name="Plumb R."/>
            <person name="Rajan J."/>
            <person name="Raymond C."/>
            <person name="Rouse G."/>
            <person name="Saenphimmachak C."/>
            <person name="Sehra H.K."/>
            <person name="Sheridan E."/>
            <person name="Shownkeen R."/>
            <person name="Sims S."/>
            <person name="Skuce C.D."/>
            <person name="Smith M."/>
            <person name="Steward C."/>
            <person name="Subramanian S."/>
            <person name="Sycamore N."/>
            <person name="Tracey A."/>
            <person name="Tromans A."/>
            <person name="Van Helmond Z."/>
            <person name="Wall M."/>
            <person name="Wallis J.M."/>
            <person name="White S."/>
            <person name="Whitehead S.L."/>
            <person name="Wilkinson J.E."/>
            <person name="Willey D.L."/>
            <person name="Williams H."/>
            <person name="Wilming L."/>
            <person name="Wray P.W."/>
            <person name="Wu Z."/>
            <person name="Coulson A."/>
            <person name="Vaudin M."/>
            <person name="Sulston J.E."/>
            <person name="Durbin R.M."/>
            <person name="Hubbard T."/>
            <person name="Wooster R."/>
            <person name="Dunham I."/>
            <person name="Carter N.P."/>
            <person name="McVean G."/>
            <person name="Ross M.T."/>
            <person name="Harrow J."/>
            <person name="Olson M.V."/>
            <person name="Beck S."/>
            <person name="Rogers J."/>
            <person name="Bentley D.R."/>
        </authorList>
    </citation>
    <scope>NUCLEOTIDE SEQUENCE [LARGE SCALE GENOMIC DNA]</scope>
</reference>
<reference key="2">
    <citation type="submission" date="2005-07" db="EMBL/GenBank/DDBJ databases">
        <authorList>
            <person name="Mural R.J."/>
            <person name="Istrail S."/>
            <person name="Sutton G.G."/>
            <person name="Florea L."/>
            <person name="Halpern A.L."/>
            <person name="Mobarry C.M."/>
            <person name="Lippert R."/>
            <person name="Walenz B."/>
            <person name="Shatkay H."/>
            <person name="Dew I."/>
            <person name="Miller J.R."/>
            <person name="Flanigan M.J."/>
            <person name="Edwards N.J."/>
            <person name="Bolanos R."/>
            <person name="Fasulo D."/>
            <person name="Halldorsson B.V."/>
            <person name="Hannenhalli S."/>
            <person name="Turner R."/>
            <person name="Yooseph S."/>
            <person name="Lu F."/>
            <person name="Nusskern D.R."/>
            <person name="Shue B.C."/>
            <person name="Zheng X.H."/>
            <person name="Zhong F."/>
            <person name="Delcher A.L."/>
            <person name="Huson D.H."/>
            <person name="Kravitz S.A."/>
            <person name="Mouchard L."/>
            <person name="Reinert K."/>
            <person name="Remington K.A."/>
            <person name="Clark A.G."/>
            <person name="Waterman M.S."/>
            <person name="Eichler E.E."/>
            <person name="Adams M.D."/>
            <person name="Hunkapiller M.W."/>
            <person name="Myers E.W."/>
            <person name="Venter J.C."/>
        </authorList>
    </citation>
    <scope>NUCLEOTIDE SEQUENCE [LARGE SCALE GENOMIC DNA]</scope>
</reference>
<reference key="3">
    <citation type="journal article" date="2004" name="Genome Res.">
        <title>The status, quality, and expansion of the NIH full-length cDNA project: the Mammalian Gene Collection (MGC).</title>
        <authorList>
            <consortium name="The MGC Project Team"/>
        </authorList>
    </citation>
    <scope>NUCLEOTIDE SEQUENCE [LARGE SCALE MRNA]</scope>
</reference>
<reference key="4">
    <citation type="journal article" date="2005" name="J. Invest. Dermatol.">
        <title>Late cornified envelope family in differentiating epithelia -- response to calcium and ultraviolet irradiation.</title>
        <authorList>
            <person name="Jackson B."/>
            <person name="Tilli C.L."/>
            <person name="Hardman M."/>
            <person name="Avilion A."/>
            <person name="Macleod M."/>
            <person name="Ashcroft G."/>
            <person name="Byrne C."/>
        </authorList>
    </citation>
    <scope>NOMENCLATURE</scope>
    <scope>TISSUE SPECIFICITY</scope>
</reference>
<reference key="5">
    <citation type="journal article" date="2017" name="J. Invest. Dermatol.">
        <title>Psoriasis-Associated Late Cornified Envelope (LCE) Proteins Have Antibacterial Activity.</title>
        <authorList>
            <person name="Niehues H."/>
            <person name="Tsoi L.C."/>
            <person name="van der Krieken D.A."/>
            <person name="Jansen P.A.M."/>
            <person name="Oortveld M.A.W."/>
            <person name="Rodijk-Olthuis D."/>
            <person name="van Vlijmen I.M.J.J."/>
            <person name="Hendriks W.J.A.J."/>
            <person name="Helder R.W."/>
            <person name="Bouwstra J.A."/>
            <person name="van den Bogaard E.H."/>
            <person name="Stuart P.E."/>
            <person name="Nair R.P."/>
            <person name="Elder J.T."/>
            <person name="Zeeuwen P.L.J.M."/>
            <person name="Schalkwijk J."/>
        </authorList>
    </citation>
    <scope>FUNCTION</scope>
</reference>
<reference key="6">
    <citation type="journal article" date="2023" name="J. Invest. Dermatol.">
        <title>CYSRT1: An Antimicrobial Epidermal Protein that Can Interact with Late Cornified Envelope Proteins.</title>
        <authorList>
            <person name="Niehues H."/>
            <person name="Rikken G."/>
            <person name="Kersten F.F.J."/>
            <person name="Eeftens J.M."/>
            <person name="van Vlijmen-Willems I.M.J.J."/>
            <person name="Rodijk-Olthuis D."/>
            <person name="Jansen P.A.M."/>
            <person name="Hendriks W.J.A.J."/>
            <person name="Ederveen T.H.A."/>
            <person name="Schalkwijk J."/>
            <person name="van den Bogaard E.H."/>
            <person name="Zeeuwen P.L.J.M."/>
        </authorList>
    </citation>
    <scope>INTERACTION WITH CYSRT1</scope>
</reference>
<accession>Q5T5A8</accession>
<accession>A1L420</accession>
<comment type="function">
    <text evidence="3 7">A structural component of the cornified envelope of the stratum corneum involved in innate cutaneous host defense (Probable). Possesses defensin-like antimicrobial activity against a broad spectrum of Gram-positive and Gram-negative bacteria, both aerobic and anaerobic species. Upon inflammation, may regulate skin barrier repair by shaping cutaneous microbiota composition and immune response to bacterial antigens (PubMed:28634035).</text>
</comment>
<comment type="subunit">
    <text evidence="4">Interacts with CYSRT1; the interaction is direct.</text>
</comment>
<comment type="interaction">
    <interactant intactId="EBI-10245291">
        <id>Q5T5A8</id>
    </interactant>
    <interactant intactId="EBI-10173507">
        <id>Q6UY14-3</id>
        <label>ADAMTSL4</label>
    </interactant>
    <organismsDiffer>false</organismsDiffer>
    <experiments>6</experiments>
</comment>
<comment type="interaction">
    <interactant intactId="EBI-10245291">
        <id>Q5T5A8</id>
    </interactant>
    <interactant intactId="EBI-1211484">
        <id>P05187</id>
        <label>ALPP</label>
    </interactant>
    <organismsDiffer>false</organismsDiffer>
    <experiments>3</experiments>
</comment>
<comment type="interaction">
    <interactant intactId="EBI-10245291">
        <id>Q5T5A8</id>
    </interactant>
    <interactant intactId="EBI-741528">
        <id>Q9UKJ5</id>
        <label>CHIC2</label>
    </interactant>
    <organismsDiffer>false</organismsDiffer>
    <experiments>6</experiments>
</comment>
<comment type="interaction">
    <interactant intactId="EBI-10245291">
        <id>Q5T5A8</id>
    </interactant>
    <interactant intactId="EBI-14156412">
        <id>Q08AG9</id>
        <label>CYP21A2</label>
    </interactant>
    <organismsDiffer>false</organismsDiffer>
    <experiments>3</experiments>
</comment>
<comment type="interaction">
    <interactant intactId="EBI-10245291">
        <id>Q5T5A8</id>
    </interactant>
    <interactant intactId="EBI-3867333">
        <id>A8MQ03</id>
        <label>CYSRT1</label>
    </interactant>
    <organismsDiffer>false</organismsDiffer>
    <experiments>6</experiments>
</comment>
<comment type="interaction">
    <interactant intactId="EBI-10245291">
        <id>Q5T5A8</id>
    </interactant>
    <interactant intactId="EBI-743414">
        <id>O95967</id>
        <label>EFEMP2</label>
    </interactant>
    <organismsDiffer>false</organismsDiffer>
    <experiments>3</experiments>
</comment>
<comment type="interaction">
    <interactant intactId="EBI-10245291">
        <id>Q5T5A8</id>
    </interactant>
    <interactant intactId="EBI-747754">
        <id>P28799</id>
        <label>GRN</label>
    </interactant>
    <organismsDiffer>false</organismsDiffer>
    <experiments>3</experiments>
</comment>
<comment type="interaction">
    <interactant intactId="EBI-10245291">
        <id>Q5T5A8</id>
    </interactant>
    <interactant intactId="EBI-740785">
        <id>P49639</id>
        <label>HOXA1</label>
    </interactant>
    <organismsDiffer>false</organismsDiffer>
    <experiments>3</experiments>
</comment>
<comment type="interaction">
    <interactant intactId="EBI-10245291">
        <id>Q5T5A8</id>
    </interactant>
    <interactant intactId="EBI-10981970">
        <id>Q5T749</id>
        <label>KPRP</label>
    </interactant>
    <organismsDiffer>false</organismsDiffer>
    <experiments>5</experiments>
</comment>
<comment type="interaction">
    <interactant intactId="EBI-10245291">
        <id>Q5T5A8</id>
    </interactant>
    <interactant intactId="EBI-948001">
        <id>Q15323</id>
        <label>KRT31</label>
    </interactant>
    <organismsDiffer>false</organismsDiffer>
    <experiments>3</experiments>
</comment>
<comment type="interaction">
    <interactant intactId="EBI-10245291">
        <id>Q5T5A8</id>
    </interactant>
    <interactant intactId="EBI-11959885">
        <id>Q07627</id>
        <label>KRTAP1-1</label>
    </interactant>
    <organismsDiffer>false</organismsDiffer>
    <experiments>3</experiments>
</comment>
<comment type="interaction">
    <interactant intactId="EBI-10245291">
        <id>Q5T5A8</id>
    </interactant>
    <interactant intactId="EBI-11749135">
        <id>Q8IUG1</id>
        <label>KRTAP1-3</label>
    </interactant>
    <organismsDiffer>false</organismsDiffer>
    <experiments>3</experiments>
</comment>
<comment type="interaction">
    <interactant intactId="EBI-10245291">
        <id>Q5T5A8</id>
    </interactant>
    <interactant intactId="EBI-10217483">
        <id>P60412</id>
        <label>KRTAP10-11</label>
    </interactant>
    <organismsDiffer>false</organismsDiffer>
    <experiments>3</experiments>
</comment>
<comment type="interaction">
    <interactant intactId="EBI-10245291">
        <id>Q5T5A8</id>
    </interactant>
    <interactant intactId="EBI-10172150">
        <id>P60370</id>
        <label>KRTAP10-5</label>
    </interactant>
    <organismsDiffer>false</organismsDiffer>
    <experiments>7</experiments>
</comment>
<comment type="interaction">
    <interactant intactId="EBI-10245291">
        <id>Q5T5A8</id>
    </interactant>
    <interactant intactId="EBI-10172290">
        <id>P60409</id>
        <label>KRTAP10-7</label>
    </interactant>
    <organismsDiffer>false</organismsDiffer>
    <experiments>3</experiments>
</comment>
<comment type="interaction">
    <interactant intactId="EBI-10245291">
        <id>Q5T5A8</id>
    </interactant>
    <interactant intactId="EBI-10171774">
        <id>P60410</id>
        <label>KRTAP10-8</label>
    </interactant>
    <organismsDiffer>false</organismsDiffer>
    <experiments>6</experiments>
</comment>
<comment type="interaction">
    <interactant intactId="EBI-10245291">
        <id>Q5T5A8</id>
    </interactant>
    <interactant intactId="EBI-10172052">
        <id>P60411</id>
        <label>KRTAP10-9</label>
    </interactant>
    <organismsDiffer>false</organismsDiffer>
    <experiments>10</experiments>
</comment>
<comment type="interaction">
    <interactant intactId="EBI-10245291">
        <id>Q5T5A8</id>
    </interactant>
    <interactant intactId="EBI-1052037">
        <id>Q8IUC1</id>
        <label>KRTAP11-1</label>
    </interactant>
    <organismsDiffer>false</organismsDiffer>
    <experiments>3</experiments>
</comment>
<comment type="interaction">
    <interactant intactId="EBI-10245291">
        <id>Q5T5A8</id>
    </interactant>
    <interactant intactId="EBI-11953334">
        <id>P60328</id>
        <label>KRTAP12-3</label>
    </interactant>
    <organismsDiffer>false</organismsDiffer>
    <experiments>6</experiments>
</comment>
<comment type="interaction">
    <interactant intactId="EBI-10245291">
        <id>Q5T5A8</id>
    </interactant>
    <interactant intactId="EBI-11988175">
        <id>Q9BYP8</id>
        <label>KRTAP17-1</label>
    </interactant>
    <organismsDiffer>false</organismsDiffer>
    <experiments>5</experiments>
</comment>
<comment type="interaction">
    <interactant intactId="EBI-10245291">
        <id>Q5T5A8</id>
    </interactant>
    <interactant intactId="EBI-14065470">
        <id>Q9BYR9</id>
        <label>KRTAP2-4</label>
    </interactant>
    <organismsDiffer>false</organismsDiffer>
    <experiments>3</experiments>
</comment>
<comment type="interaction">
    <interactant intactId="EBI-10245291">
        <id>Q5T5A8</id>
    </interactant>
    <interactant intactId="EBI-751260">
        <id>Q9BYR7</id>
        <label>KRTAP3-2</label>
    </interactant>
    <organismsDiffer>false</organismsDiffer>
    <experiments>8</experiments>
</comment>
<comment type="interaction">
    <interactant intactId="EBI-10245291">
        <id>Q5T5A8</id>
    </interactant>
    <interactant intactId="EBI-3957694">
        <id>Q9BYR6</id>
        <label>KRTAP3-3</label>
    </interactant>
    <organismsDiffer>false</organismsDiffer>
    <experiments>3</experiments>
</comment>
<comment type="interaction">
    <interactant intactId="EBI-10245291">
        <id>Q5T5A8</id>
    </interactant>
    <interactant intactId="EBI-34579671">
        <id>Q9BYQ7</id>
        <label>KRTAP4-1</label>
    </interactant>
    <organismsDiffer>false</organismsDiffer>
    <experiments>3</experiments>
</comment>
<comment type="interaction">
    <interactant intactId="EBI-10245291">
        <id>Q5T5A8</id>
    </interactant>
    <interactant intactId="EBI-10302392">
        <id>Q9BYQ6</id>
        <label>KRTAP4-11</label>
    </interactant>
    <organismsDiffer>false</organismsDiffer>
    <experiments>3</experiments>
</comment>
<comment type="interaction">
    <interactant intactId="EBI-10245291">
        <id>Q5T5A8</id>
    </interactant>
    <interactant intactId="EBI-739863">
        <id>Q9BQ66</id>
        <label>KRTAP4-12</label>
    </interactant>
    <organismsDiffer>false</organismsDiffer>
    <experiments>8</experiments>
</comment>
<comment type="interaction">
    <interactant intactId="EBI-10245291">
        <id>Q5T5A8</id>
    </interactant>
    <interactant intactId="EBI-10172511">
        <id>Q9BYR5</id>
        <label>KRTAP4-2</label>
    </interactant>
    <organismsDiffer>false</organismsDiffer>
    <experiments>6</experiments>
</comment>
<comment type="interaction">
    <interactant intactId="EBI-10245291">
        <id>Q5T5A8</id>
    </interactant>
    <interactant intactId="EBI-11958132">
        <id>Q9BYR3</id>
        <label>KRTAP4-4</label>
    </interactant>
    <organismsDiffer>false</organismsDiffer>
    <experiments>8</experiments>
</comment>
<comment type="interaction">
    <interactant intactId="EBI-10245291">
        <id>Q5T5A8</id>
    </interactant>
    <interactant intactId="EBI-11993254">
        <id>Q9BYR2</id>
        <label>KRTAP4-5</label>
    </interactant>
    <organismsDiffer>false</organismsDiffer>
    <experiments>8</experiments>
</comment>
<comment type="interaction">
    <interactant intactId="EBI-10245291">
        <id>Q5T5A8</id>
    </interactant>
    <interactant intactId="EBI-11993296">
        <id>Q6L8G4</id>
        <label>KRTAP5-11</label>
    </interactant>
    <organismsDiffer>false</organismsDiffer>
    <experiments>3</experiments>
</comment>
<comment type="interaction">
    <interactant intactId="EBI-10245291">
        <id>Q5T5A8</id>
    </interactant>
    <interactant intactId="EBI-11958178">
        <id>Q701N4</id>
        <label>KRTAP5-2</label>
    </interactant>
    <organismsDiffer>false</organismsDiffer>
    <experiments>6</experiments>
</comment>
<comment type="interaction">
    <interactant intactId="EBI-10245291">
        <id>Q5T5A8</id>
    </interactant>
    <interactant intactId="EBI-11974251">
        <id>Q6L8H2</id>
        <label>KRTAP5-3</label>
    </interactant>
    <organismsDiffer>false</organismsDiffer>
    <experiments>3</experiments>
</comment>
<comment type="interaction">
    <interactant intactId="EBI-10245291">
        <id>Q5T5A8</id>
    </interactant>
    <interactant intactId="EBI-11963072">
        <id>Q6L8H1</id>
        <label>KRTAP5-4</label>
    </interactant>
    <organismsDiffer>false</organismsDiffer>
    <experiments>5</experiments>
</comment>
<comment type="interaction">
    <interactant intactId="EBI-10245291">
        <id>Q5T5A8</id>
    </interactant>
    <interactant intactId="EBI-10250562">
        <id>Q6L8G9</id>
        <label>KRTAP5-6</label>
    </interactant>
    <organismsDiffer>false</organismsDiffer>
    <experiments>3</experiments>
</comment>
<comment type="interaction">
    <interactant intactId="EBI-10245291">
        <id>Q5T5A8</id>
    </interactant>
    <interactant intactId="EBI-3958099">
        <id>P26371</id>
        <label>KRTAP5-9</label>
    </interactant>
    <organismsDiffer>false</organismsDiffer>
    <experiments>10</experiments>
</comment>
<comment type="interaction">
    <interactant intactId="EBI-10245291">
        <id>Q5T5A8</id>
    </interactant>
    <interactant intactId="EBI-22311199">
        <id>Q3LI67</id>
        <label>KRTAP6-3</label>
    </interactant>
    <organismsDiffer>false</organismsDiffer>
    <experiments>3</experiments>
</comment>
<comment type="interaction">
    <interactant intactId="EBI-10245291">
        <id>Q5T5A8</id>
    </interactant>
    <interactant intactId="EBI-1044640">
        <id>Q9BYQ4</id>
        <label>KRTAP9-2</label>
    </interactant>
    <organismsDiffer>false</organismsDiffer>
    <experiments>3</experiments>
</comment>
<comment type="interaction">
    <interactant intactId="EBI-10245291">
        <id>Q5T5A8</id>
    </interactant>
    <interactant intactId="EBI-1043191">
        <id>Q9BYQ3</id>
        <label>KRTAP9-3</label>
    </interactant>
    <organismsDiffer>false</organismsDiffer>
    <experiments>6</experiments>
</comment>
<comment type="interaction">
    <interactant intactId="EBI-10245291">
        <id>Q5T5A8</id>
    </interactant>
    <interactant intactId="EBI-10185730">
        <id>Q9BYQ2</id>
        <label>KRTAP9-4</label>
    </interactant>
    <organismsDiffer>false</organismsDiffer>
    <experiments>3</experiments>
</comment>
<comment type="interaction">
    <interactant intactId="EBI-10245291">
        <id>Q5T5A8</id>
    </interactant>
    <interactant intactId="EBI-10245913">
        <id>Q5T7P3</id>
        <label>LCE1B</label>
    </interactant>
    <organismsDiffer>false</organismsDiffer>
    <experiments>3</experiments>
</comment>
<comment type="interaction">
    <interactant intactId="EBI-10245291">
        <id>Q5T5A8</id>
    </interactant>
    <interactant intactId="EBI-724076">
        <id>Q99750</id>
        <label>MDFI</label>
    </interactant>
    <organismsDiffer>false</organismsDiffer>
    <experiments>5</experiments>
</comment>
<comment type="interaction">
    <interactant intactId="EBI-10245291">
        <id>Q5T5A8</id>
    </interactant>
    <interactant intactId="EBI-945833">
        <id>Q7Z3S9</id>
        <label>NOTCH2NLA</label>
    </interactant>
    <organismsDiffer>false</organismsDiffer>
    <experiments>3</experiments>
</comment>
<comment type="interaction">
    <interactant intactId="EBI-10245291">
        <id>Q5T5A8</id>
    </interactant>
    <interactant intactId="EBI-22310682">
        <id>P0DPK4</id>
        <label>NOTCH2NLC</label>
    </interactant>
    <organismsDiffer>false</organismsDiffer>
    <experiments>3</experiments>
</comment>
<comment type="interaction">
    <interactant intactId="EBI-10245291">
        <id>Q5T5A8</id>
    </interactant>
    <interactant intactId="EBI-751290">
        <id>Q92824</id>
        <label>PCSK5</label>
    </interactant>
    <organismsDiffer>false</organismsDiffer>
    <experiments>3</experiments>
</comment>
<comment type="interaction">
    <interactant intactId="EBI-10245291">
        <id>Q5T5A8</id>
    </interactant>
    <interactant intactId="EBI-11956269">
        <id>Q92824-2</id>
        <label>PCSK5</label>
    </interactant>
    <organismsDiffer>false</organismsDiffer>
    <experiments>3</experiments>
</comment>
<comment type="interaction">
    <interactant intactId="EBI-10245291">
        <id>Q5T5A8</id>
    </interactant>
    <interactant intactId="EBI-3918154">
        <id>Q9UGC6</id>
        <label>RGS17</label>
    </interactant>
    <organismsDiffer>false</organismsDiffer>
    <experiments>3</experiments>
</comment>
<comment type="interaction">
    <interactant intactId="EBI-10245291">
        <id>Q5T5A8</id>
    </interactant>
    <interactant intactId="EBI-10178530">
        <id>O76081-6</id>
        <label>RGS20</label>
    </interactant>
    <organismsDiffer>false</organismsDiffer>
    <experiments>3</experiments>
</comment>
<comment type="interaction">
    <interactant intactId="EBI-10245291">
        <id>Q5T5A8</id>
    </interactant>
    <interactant intactId="EBI-3866665">
        <id>O43609</id>
        <label>SPRY1</label>
    </interactant>
    <organismsDiffer>false</organismsDiffer>
    <experiments>3</experiments>
</comment>
<comment type="interaction">
    <interactant intactId="EBI-10245291">
        <id>Q5T5A8</id>
    </interactant>
    <interactant intactId="EBI-742487">
        <id>O43597</id>
        <label>SPRY2</label>
    </interactant>
    <organismsDiffer>false</organismsDiffer>
    <experiments>3</experiments>
</comment>
<comment type="interaction">
    <interactant intactId="EBI-10245291">
        <id>Q5T5A8</id>
    </interactant>
    <interactant intactId="EBI-5235829">
        <id>Q8IWZ5</id>
        <label>TRIM42</label>
    </interactant>
    <organismsDiffer>false</organismsDiffer>
    <experiments>5</experiments>
</comment>
<comment type="interaction">
    <interactant intactId="EBI-10245291">
        <id>Q5T5A8</id>
    </interactant>
    <interactant intactId="EBI-8652667">
        <id>O14817</id>
        <label>TSPAN4</label>
    </interactant>
    <organismsDiffer>false</organismsDiffer>
    <experiments>3</experiments>
</comment>
<comment type="interaction">
    <interactant intactId="EBI-10245291">
        <id>Q5T5A8</id>
    </interactant>
    <interactant intactId="EBI-625509">
        <id>Q8N720</id>
        <label>ZNF655</label>
    </interactant>
    <organismsDiffer>false</organismsDiffer>
    <experiments>3</experiments>
</comment>
<comment type="tissue specificity">
    <text evidence="2">Skin-specific. Expression was readily detected in adult trunk skin, adult arm skin, fetal skin, penal skin, vulva, esophagus and tongue. Not expressed in the cervix, rectum, lung, colon, or placenta.</text>
</comment>
<comment type="similarity">
    <text evidence="6">Belongs to the LCE family.</text>
</comment>
<evidence type="ECO:0000256" key="1">
    <source>
        <dbReference type="SAM" id="MobiDB-lite"/>
    </source>
</evidence>
<evidence type="ECO:0000269" key="2">
    <source>
    </source>
</evidence>
<evidence type="ECO:0000269" key="3">
    <source>
    </source>
</evidence>
<evidence type="ECO:0000269" key="4">
    <source>
    </source>
</evidence>
<evidence type="ECO:0000303" key="5">
    <source>
    </source>
</evidence>
<evidence type="ECO:0000305" key="6"/>
<evidence type="ECO:0000305" key="7">
    <source>
    </source>
</evidence>
<evidence type="ECO:0000312" key="8">
    <source>
        <dbReference type="HGNC" id="HGNC:16612"/>
    </source>
</evidence>
<gene>
    <name evidence="5 8" type="primary">LCE3C</name>
    <name evidence="5" type="synonym">LEP15</name>
    <name type="synonym">SPRL3A</name>
</gene>
<sequence length="94" mass="9729">MSCQQNQQQCQPPPSCPSPKCPPKSPAQCLPPPSSDCALSSGGCGPSSESGCCLSHHRHFRSHQCRRQRSNSCDRGSGQQGGGSCRGHGSGGCC</sequence>
<dbReference type="EMBL" id="AL356426">
    <property type="status" value="NOT_ANNOTATED_CDS"/>
    <property type="molecule type" value="Genomic_DNA"/>
</dbReference>
<dbReference type="EMBL" id="CH878618">
    <property type="protein sequence ID" value="EAW50650.1"/>
    <property type="molecule type" value="Genomic_DNA"/>
</dbReference>
<dbReference type="EMBL" id="BC130365">
    <property type="protein sequence ID" value="AAI30366.1"/>
    <property type="molecule type" value="mRNA"/>
</dbReference>
<dbReference type="EMBL" id="BC130367">
    <property type="protein sequence ID" value="AAI30368.1"/>
    <property type="molecule type" value="mRNA"/>
</dbReference>
<dbReference type="CCDS" id="CCDS1015.1"/>
<dbReference type="RefSeq" id="NP_848521.1">
    <property type="nucleotide sequence ID" value="NM_178434.3"/>
</dbReference>
<dbReference type="BioGRID" id="131650">
    <property type="interactions" value="66"/>
</dbReference>
<dbReference type="FunCoup" id="Q5T5A8">
    <property type="interactions" value="29"/>
</dbReference>
<dbReference type="IntAct" id="Q5T5A8">
    <property type="interactions" value="52"/>
</dbReference>
<dbReference type="STRING" id="9606.ENSP00000334644"/>
<dbReference type="BioMuta" id="LCE3C"/>
<dbReference type="DMDM" id="74745051"/>
<dbReference type="MassIVE" id="Q5T5A8"/>
<dbReference type="PaxDb" id="9606-ENSP00000334644"/>
<dbReference type="PeptideAtlas" id="Q5T5A8"/>
<dbReference type="Antibodypedia" id="60406">
    <property type="antibodies" value="19 antibodies from 7 providers"/>
</dbReference>
<dbReference type="DNASU" id="353144"/>
<dbReference type="Ensembl" id="ENST00000333881.3">
    <property type="protein sequence ID" value="ENSP00000334644.3"/>
    <property type="gene ID" value="ENSG00000244057.5"/>
</dbReference>
<dbReference type="Ensembl" id="ENST00000684028.1">
    <property type="protein sequence ID" value="ENSP00000507204.1"/>
    <property type="gene ID" value="ENSG00000244057.5"/>
</dbReference>
<dbReference type="GeneID" id="353144"/>
<dbReference type="KEGG" id="hsa:353144"/>
<dbReference type="MANE-Select" id="ENST00000684028.1">
    <property type="protein sequence ID" value="ENSP00000507204.1"/>
    <property type="RefSeq nucleotide sequence ID" value="NM_178434.3"/>
    <property type="RefSeq protein sequence ID" value="NP_848521.1"/>
</dbReference>
<dbReference type="UCSC" id="uc001fac.2">
    <property type="organism name" value="human"/>
</dbReference>
<dbReference type="AGR" id="HGNC:16612"/>
<dbReference type="CTD" id="353144"/>
<dbReference type="DisGeNET" id="353144"/>
<dbReference type="GeneCards" id="LCE3C"/>
<dbReference type="HGNC" id="HGNC:16612">
    <property type="gene designation" value="LCE3C"/>
</dbReference>
<dbReference type="HPA" id="ENSG00000244057">
    <property type="expression patterns" value="Tissue enriched (lymphoid)"/>
</dbReference>
<dbReference type="MIM" id="612615">
    <property type="type" value="gene"/>
</dbReference>
<dbReference type="neXtProt" id="NX_Q5T5A8"/>
<dbReference type="OpenTargets" id="ENSG00000244057"/>
<dbReference type="PharmGKB" id="PA38407"/>
<dbReference type="VEuPathDB" id="HostDB:ENSG00000244057"/>
<dbReference type="eggNOG" id="ENOG502TDZ9">
    <property type="taxonomic scope" value="Eukaryota"/>
</dbReference>
<dbReference type="GeneTree" id="ENSGT00940000163498"/>
<dbReference type="HOGENOM" id="CLU_152038_1_0_1"/>
<dbReference type="InParanoid" id="Q5T5A8"/>
<dbReference type="OMA" id="APISGAC"/>
<dbReference type="PAN-GO" id="Q5T5A8">
    <property type="GO annotations" value="0 GO annotations based on evolutionary models"/>
</dbReference>
<dbReference type="PhylomeDB" id="Q5T5A8"/>
<dbReference type="TreeFam" id="TF338709"/>
<dbReference type="PathwayCommons" id="Q5T5A8"/>
<dbReference type="Reactome" id="R-HSA-6809371">
    <property type="pathway name" value="Formation of the cornified envelope"/>
</dbReference>
<dbReference type="SignaLink" id="Q5T5A8"/>
<dbReference type="BioGRID-ORCS" id="353144">
    <property type="hits" value="48 hits in 1131 CRISPR screens"/>
</dbReference>
<dbReference type="ChiTaRS" id="LCE3C">
    <property type="organism name" value="human"/>
</dbReference>
<dbReference type="GenomeRNAi" id="353144"/>
<dbReference type="Pharos" id="Q5T5A8">
    <property type="development level" value="Tbio"/>
</dbReference>
<dbReference type="PRO" id="PR:Q5T5A8"/>
<dbReference type="Proteomes" id="UP000005640">
    <property type="component" value="Chromosome 1"/>
</dbReference>
<dbReference type="RNAct" id="Q5T5A8">
    <property type="molecule type" value="protein"/>
</dbReference>
<dbReference type="Bgee" id="ENSG00000244057">
    <property type="expression patterns" value="Expressed in male germ line stem cell (sensu Vertebrata) in testis and 20 other cell types or tissues"/>
</dbReference>
<dbReference type="GO" id="GO:0050829">
    <property type="term" value="P:defense response to Gram-negative bacterium"/>
    <property type="evidence" value="ECO:0000314"/>
    <property type="project" value="UniProtKB"/>
</dbReference>
<dbReference type="GO" id="GO:0050830">
    <property type="term" value="P:defense response to Gram-positive bacterium"/>
    <property type="evidence" value="ECO:0000314"/>
    <property type="project" value="UniProtKB"/>
</dbReference>
<dbReference type="GO" id="GO:0031424">
    <property type="term" value="P:keratinization"/>
    <property type="evidence" value="ECO:0007669"/>
    <property type="project" value="UniProtKB-KW"/>
</dbReference>
<dbReference type="GO" id="GO:0031640">
    <property type="term" value="P:killing of cells of another organism"/>
    <property type="evidence" value="ECO:0000314"/>
    <property type="project" value="UniProtKB"/>
</dbReference>
<dbReference type="InterPro" id="IPR028205">
    <property type="entry name" value="LCE"/>
</dbReference>
<dbReference type="Pfam" id="PF14672">
    <property type="entry name" value="LCE"/>
    <property type="match status" value="1"/>
</dbReference>
<keyword id="KW-0929">Antimicrobial</keyword>
<keyword id="KW-0417">Keratinization</keyword>
<keyword id="KW-1267">Proteomics identification</keyword>
<keyword id="KW-1185">Reference proteome</keyword>
<organism>
    <name type="scientific">Homo sapiens</name>
    <name type="common">Human</name>
    <dbReference type="NCBI Taxonomy" id="9606"/>
    <lineage>
        <taxon>Eukaryota</taxon>
        <taxon>Metazoa</taxon>
        <taxon>Chordata</taxon>
        <taxon>Craniata</taxon>
        <taxon>Vertebrata</taxon>
        <taxon>Euteleostomi</taxon>
        <taxon>Mammalia</taxon>
        <taxon>Eutheria</taxon>
        <taxon>Euarchontoglires</taxon>
        <taxon>Primates</taxon>
        <taxon>Haplorrhini</taxon>
        <taxon>Catarrhini</taxon>
        <taxon>Hominidae</taxon>
        <taxon>Homo</taxon>
    </lineage>
</organism>
<name>LCE3C_HUMAN</name>
<feature type="chain" id="PRO_0000235335" description="Late cornified envelope protein 3C">
    <location>
        <begin position="1"/>
        <end position="94"/>
    </location>
</feature>
<feature type="region of interest" description="Disordered" evidence="1">
    <location>
        <begin position="1"/>
        <end position="35"/>
    </location>
</feature>
<feature type="region of interest" description="Disordered" evidence="1">
    <location>
        <begin position="65"/>
        <end position="94"/>
    </location>
</feature>
<feature type="compositionally biased region" description="Low complexity" evidence="1">
    <location>
        <begin position="1"/>
        <end position="10"/>
    </location>
</feature>
<feature type="compositionally biased region" description="Pro residues" evidence="1">
    <location>
        <begin position="11"/>
        <end position="34"/>
    </location>
</feature>
<feature type="compositionally biased region" description="Gly residues" evidence="1">
    <location>
        <begin position="78"/>
        <end position="94"/>
    </location>
</feature>
<proteinExistence type="evidence at protein level"/>